<accession>Q0SR12</accession>
<evidence type="ECO:0000255" key="1">
    <source>
        <dbReference type="HAMAP-Rule" id="MF_00094"/>
    </source>
</evidence>
<proteinExistence type="inferred from homology"/>
<reference key="1">
    <citation type="journal article" date="2006" name="Genome Res.">
        <title>Skewed genomic variability in strains of the toxigenic bacterial pathogen, Clostridium perfringens.</title>
        <authorList>
            <person name="Myers G.S.A."/>
            <person name="Rasko D.A."/>
            <person name="Cheung J.K."/>
            <person name="Ravel J."/>
            <person name="Seshadri R."/>
            <person name="DeBoy R.T."/>
            <person name="Ren Q."/>
            <person name="Varga J."/>
            <person name="Awad M.M."/>
            <person name="Brinkac L.M."/>
            <person name="Daugherty S.C."/>
            <person name="Haft D.H."/>
            <person name="Dodson R.J."/>
            <person name="Madupu R."/>
            <person name="Nelson W.C."/>
            <person name="Rosovitz M.J."/>
            <person name="Sullivan S.A."/>
            <person name="Khouri H."/>
            <person name="Dimitrov G.I."/>
            <person name="Watkins K.L."/>
            <person name="Mulligan S."/>
            <person name="Benton J."/>
            <person name="Radune D."/>
            <person name="Fisher D.J."/>
            <person name="Atkins H.S."/>
            <person name="Hiscox T."/>
            <person name="Jost B.H."/>
            <person name="Billington S.J."/>
            <person name="Songer J.G."/>
            <person name="McClane B.A."/>
            <person name="Titball R.W."/>
            <person name="Rood J.I."/>
            <person name="Melville S.B."/>
            <person name="Paulsen I.T."/>
        </authorList>
    </citation>
    <scope>NUCLEOTIDE SEQUENCE [LARGE SCALE GENOMIC DNA]</scope>
    <source>
        <strain>SM101 / Type A</strain>
    </source>
</reference>
<reference key="2">
    <citation type="submission" date="2009-08" db="EMBL/GenBank/DDBJ databases">
        <authorList>
            <person name="Shrivastava S."/>
            <person name="Brinkac L.M."/>
            <person name="Dodson R.J."/>
            <person name="Harkins D.M."/>
            <person name="Durkin A.S."/>
            <person name="Sutton G."/>
        </authorList>
    </citation>
    <scope>SEQUENCE REVISION TO 27</scope>
</reference>
<comment type="function">
    <text evidence="1">Peptide chain release factor 2 directs the termination of translation in response to the peptide chain termination codons UGA and UAA.</text>
</comment>
<comment type="subcellular location">
    <subcellularLocation>
        <location evidence="1">Cytoplasm</location>
    </subcellularLocation>
</comment>
<comment type="PTM">
    <text evidence="1">Methylated by PrmC. Methylation increases the termination efficiency of RF2.</text>
</comment>
<comment type="similarity">
    <text evidence="1">Belongs to the prokaryotic/mitochondrial release factor family.</text>
</comment>
<name>RF2_CLOPS</name>
<sequence length="364" mass="41166">MIMELENQLSKLHELKNNLKEMGASLDLASLEKKSAELELKMQEAGFWDDVQKAQEVTQEAKRVKDKIDKFKNLNERIDDVEVLKELMEENDEETAKEIISEVKALSKEIDTLKIETILSGEYDRNNAILTLHTGVGGSDANDWTEMLLRMYTRWCEKKGYSLETIDYLPGDEAGVKSVTLKVKGEFAYGYLKAEKGIHRLVRISPFNANGKRQTSFASVEVLPELTSDQDIEINPVDLRIDTYRAGGAGGQHVNKTESAVRITHIPTGIVVQCQNERSQFSNRDTAMGMLKSKLIELKERAHKEKIEDLTGELKDMGWGSQIRSYVFHPYSMVKDHRTNVETSNVNGVMGGDIDNFIIAYLNS</sequence>
<gene>
    <name evidence="1" type="primary">prfB</name>
    <name type="ordered locus">CPR_2138</name>
</gene>
<keyword id="KW-0963">Cytoplasm</keyword>
<keyword id="KW-0488">Methylation</keyword>
<keyword id="KW-0648">Protein biosynthesis</keyword>
<dbReference type="EMBL" id="CP000312">
    <property type="protein sequence ID" value="ABG86573.2"/>
    <property type="molecule type" value="Genomic_DNA"/>
</dbReference>
<dbReference type="RefSeq" id="WP_011592967.1">
    <property type="nucleotide sequence ID" value="NC_008262.1"/>
</dbReference>
<dbReference type="SMR" id="Q0SR12"/>
<dbReference type="KEGG" id="cpr:CPR_2138"/>
<dbReference type="Proteomes" id="UP000001824">
    <property type="component" value="Chromosome"/>
</dbReference>
<dbReference type="GO" id="GO:0005737">
    <property type="term" value="C:cytoplasm"/>
    <property type="evidence" value="ECO:0007669"/>
    <property type="project" value="UniProtKB-SubCell"/>
</dbReference>
<dbReference type="GO" id="GO:0016149">
    <property type="term" value="F:translation release factor activity, codon specific"/>
    <property type="evidence" value="ECO:0007669"/>
    <property type="project" value="UniProtKB-UniRule"/>
</dbReference>
<dbReference type="FunFam" id="3.30.160.20:FF:000010">
    <property type="entry name" value="Peptide chain release factor 2"/>
    <property type="match status" value="1"/>
</dbReference>
<dbReference type="Gene3D" id="3.30.160.20">
    <property type="match status" value="1"/>
</dbReference>
<dbReference type="Gene3D" id="3.30.70.1660">
    <property type="match status" value="1"/>
</dbReference>
<dbReference type="Gene3D" id="1.20.58.410">
    <property type="entry name" value="Release factor"/>
    <property type="match status" value="1"/>
</dbReference>
<dbReference type="HAMAP" id="MF_00094">
    <property type="entry name" value="Rel_fac_2"/>
    <property type="match status" value="1"/>
</dbReference>
<dbReference type="InterPro" id="IPR005139">
    <property type="entry name" value="PCRF"/>
</dbReference>
<dbReference type="InterPro" id="IPR000352">
    <property type="entry name" value="Pep_chain_release_fac_I"/>
</dbReference>
<dbReference type="InterPro" id="IPR045853">
    <property type="entry name" value="Pep_chain_release_fac_I_sf"/>
</dbReference>
<dbReference type="InterPro" id="IPR004374">
    <property type="entry name" value="PrfB"/>
</dbReference>
<dbReference type="NCBIfam" id="TIGR00020">
    <property type="entry name" value="prfB"/>
    <property type="match status" value="1"/>
</dbReference>
<dbReference type="PANTHER" id="PTHR43116:SF3">
    <property type="entry name" value="CLASS I PEPTIDE CHAIN RELEASE FACTOR"/>
    <property type="match status" value="1"/>
</dbReference>
<dbReference type="PANTHER" id="PTHR43116">
    <property type="entry name" value="PEPTIDE CHAIN RELEASE FACTOR 2"/>
    <property type="match status" value="1"/>
</dbReference>
<dbReference type="Pfam" id="PF03462">
    <property type="entry name" value="PCRF"/>
    <property type="match status" value="1"/>
</dbReference>
<dbReference type="Pfam" id="PF00472">
    <property type="entry name" value="RF-1"/>
    <property type="match status" value="1"/>
</dbReference>
<dbReference type="SMART" id="SM00937">
    <property type="entry name" value="PCRF"/>
    <property type="match status" value="1"/>
</dbReference>
<dbReference type="SUPFAM" id="SSF75620">
    <property type="entry name" value="Release factor"/>
    <property type="match status" value="1"/>
</dbReference>
<dbReference type="PROSITE" id="PS00745">
    <property type="entry name" value="RF_PROK_I"/>
    <property type="match status" value="1"/>
</dbReference>
<organism>
    <name type="scientific">Clostridium perfringens (strain SM101 / Type A)</name>
    <dbReference type="NCBI Taxonomy" id="289380"/>
    <lineage>
        <taxon>Bacteria</taxon>
        <taxon>Bacillati</taxon>
        <taxon>Bacillota</taxon>
        <taxon>Clostridia</taxon>
        <taxon>Eubacteriales</taxon>
        <taxon>Clostridiaceae</taxon>
        <taxon>Clostridium</taxon>
    </lineage>
</organism>
<protein>
    <recommendedName>
        <fullName evidence="1">Peptide chain release factor 2</fullName>
        <shortName evidence="1">RF-2</shortName>
    </recommendedName>
</protein>
<feature type="chain" id="PRO_1000202708" description="Peptide chain release factor 2">
    <location>
        <begin position="1"/>
        <end position="364"/>
    </location>
</feature>
<feature type="modified residue" description="N5-methylglutamine" evidence="1">
    <location>
        <position position="252"/>
    </location>
</feature>